<keyword id="KW-0687">Ribonucleoprotein</keyword>
<keyword id="KW-0689">Ribosomal protein</keyword>
<keyword id="KW-0694">RNA-binding</keyword>
<keyword id="KW-0699">rRNA-binding</keyword>
<proteinExistence type="inferred from homology"/>
<name>RL23_GEOSM</name>
<sequence>MNIYDVIKKPLITEKTTVEKDDKNVIAFVVNGAANKIEIKAAVEKLFNAQVSAVNTVNVAGKTKRTAKGIGKRSNWKKAYVTLKEGSNVDFFEA</sequence>
<accession>C6E4Q5</accession>
<comment type="function">
    <text evidence="1">One of the early assembly proteins it binds 23S rRNA. One of the proteins that surrounds the polypeptide exit tunnel on the outside of the ribosome. Forms the main docking site for trigger factor binding to the ribosome.</text>
</comment>
<comment type="subunit">
    <text evidence="1">Part of the 50S ribosomal subunit. Contacts protein L29, and trigger factor when it is bound to the ribosome.</text>
</comment>
<comment type="similarity">
    <text evidence="1">Belongs to the universal ribosomal protein uL23 family.</text>
</comment>
<evidence type="ECO:0000255" key="1">
    <source>
        <dbReference type="HAMAP-Rule" id="MF_01369"/>
    </source>
</evidence>
<evidence type="ECO:0000305" key="2"/>
<feature type="chain" id="PRO_1000215035" description="Large ribosomal subunit protein uL23">
    <location>
        <begin position="1"/>
        <end position="94"/>
    </location>
</feature>
<organism>
    <name type="scientific">Geobacter sp. (strain M21)</name>
    <dbReference type="NCBI Taxonomy" id="443144"/>
    <lineage>
        <taxon>Bacteria</taxon>
        <taxon>Pseudomonadati</taxon>
        <taxon>Thermodesulfobacteriota</taxon>
        <taxon>Desulfuromonadia</taxon>
        <taxon>Geobacterales</taxon>
        <taxon>Geobacteraceae</taxon>
        <taxon>Geobacter</taxon>
    </lineage>
</organism>
<reference key="1">
    <citation type="submission" date="2009-07" db="EMBL/GenBank/DDBJ databases">
        <title>Complete sequence of Geobacter sp. M21.</title>
        <authorList>
            <consortium name="US DOE Joint Genome Institute"/>
            <person name="Lucas S."/>
            <person name="Copeland A."/>
            <person name="Lapidus A."/>
            <person name="Glavina del Rio T."/>
            <person name="Dalin E."/>
            <person name="Tice H."/>
            <person name="Bruce D."/>
            <person name="Goodwin L."/>
            <person name="Pitluck S."/>
            <person name="Saunders E."/>
            <person name="Brettin T."/>
            <person name="Detter J.C."/>
            <person name="Han C."/>
            <person name="Larimer F."/>
            <person name="Land M."/>
            <person name="Hauser L."/>
            <person name="Kyrpides N."/>
            <person name="Ovchinnikova G."/>
            <person name="Lovley D."/>
        </authorList>
    </citation>
    <scope>NUCLEOTIDE SEQUENCE [LARGE SCALE GENOMIC DNA]</scope>
    <source>
        <strain>M21</strain>
    </source>
</reference>
<protein>
    <recommendedName>
        <fullName evidence="1">Large ribosomal subunit protein uL23</fullName>
    </recommendedName>
    <alternativeName>
        <fullName evidence="2">50S ribosomal protein L23</fullName>
    </alternativeName>
</protein>
<gene>
    <name evidence="1" type="primary">rplW</name>
    <name type="ordered locus">GM21_3326</name>
</gene>
<dbReference type="EMBL" id="CP001661">
    <property type="protein sequence ID" value="ACT19351.1"/>
    <property type="molecule type" value="Genomic_DNA"/>
</dbReference>
<dbReference type="SMR" id="C6E4Q5"/>
<dbReference type="STRING" id="443144.GM21_3326"/>
<dbReference type="KEGG" id="gem:GM21_3326"/>
<dbReference type="eggNOG" id="COG0089">
    <property type="taxonomic scope" value="Bacteria"/>
</dbReference>
<dbReference type="HOGENOM" id="CLU_037562_3_1_7"/>
<dbReference type="OrthoDB" id="9793353at2"/>
<dbReference type="GO" id="GO:1990904">
    <property type="term" value="C:ribonucleoprotein complex"/>
    <property type="evidence" value="ECO:0007669"/>
    <property type="project" value="UniProtKB-KW"/>
</dbReference>
<dbReference type="GO" id="GO:0005840">
    <property type="term" value="C:ribosome"/>
    <property type="evidence" value="ECO:0007669"/>
    <property type="project" value="UniProtKB-KW"/>
</dbReference>
<dbReference type="GO" id="GO:0019843">
    <property type="term" value="F:rRNA binding"/>
    <property type="evidence" value="ECO:0007669"/>
    <property type="project" value="UniProtKB-UniRule"/>
</dbReference>
<dbReference type="GO" id="GO:0003735">
    <property type="term" value="F:structural constituent of ribosome"/>
    <property type="evidence" value="ECO:0007669"/>
    <property type="project" value="InterPro"/>
</dbReference>
<dbReference type="GO" id="GO:0006412">
    <property type="term" value="P:translation"/>
    <property type="evidence" value="ECO:0007669"/>
    <property type="project" value="UniProtKB-UniRule"/>
</dbReference>
<dbReference type="FunFam" id="3.30.70.330:FF:000001">
    <property type="entry name" value="50S ribosomal protein L23"/>
    <property type="match status" value="1"/>
</dbReference>
<dbReference type="Gene3D" id="3.30.70.330">
    <property type="match status" value="1"/>
</dbReference>
<dbReference type="HAMAP" id="MF_01369_B">
    <property type="entry name" value="Ribosomal_uL23_B"/>
    <property type="match status" value="1"/>
</dbReference>
<dbReference type="InterPro" id="IPR012677">
    <property type="entry name" value="Nucleotide-bd_a/b_plait_sf"/>
</dbReference>
<dbReference type="InterPro" id="IPR013025">
    <property type="entry name" value="Ribosomal_uL23-like"/>
</dbReference>
<dbReference type="InterPro" id="IPR012678">
    <property type="entry name" value="Ribosomal_uL23/eL15/eS24_sf"/>
</dbReference>
<dbReference type="InterPro" id="IPR001014">
    <property type="entry name" value="Ribosomal_uL23_CS"/>
</dbReference>
<dbReference type="NCBIfam" id="NF004359">
    <property type="entry name" value="PRK05738.1-3"/>
    <property type="match status" value="1"/>
</dbReference>
<dbReference type="NCBIfam" id="NF004363">
    <property type="entry name" value="PRK05738.2-4"/>
    <property type="match status" value="1"/>
</dbReference>
<dbReference type="NCBIfam" id="NF004366">
    <property type="entry name" value="PRK05738.3-2"/>
    <property type="match status" value="1"/>
</dbReference>
<dbReference type="PANTHER" id="PTHR11620">
    <property type="entry name" value="60S RIBOSOMAL PROTEIN L23A"/>
    <property type="match status" value="1"/>
</dbReference>
<dbReference type="Pfam" id="PF00276">
    <property type="entry name" value="Ribosomal_L23"/>
    <property type="match status" value="1"/>
</dbReference>
<dbReference type="SUPFAM" id="SSF54189">
    <property type="entry name" value="Ribosomal proteins S24e, L23 and L15e"/>
    <property type="match status" value="1"/>
</dbReference>
<dbReference type="PROSITE" id="PS00050">
    <property type="entry name" value="RIBOSOMAL_L23"/>
    <property type="match status" value="1"/>
</dbReference>